<sequence length="209" mass="22905">MKKAILGKKLGMTQIFNENGRVIPVTVIEAGPCVVVQKKTEEKDGYKSIQIGFGDIREKLVNKPLKGHFAKSGVSLKRFLKEFKVDNIDEYEVGQEIKADIFAEGDRIDVSGISKGKGFQGVIRRWNAQRGPMSHGSKFHRAVGSMGASSDPSRTFKNKKMPGHMGNKNTTVLNLQVAKVIPEKNIILIKGGVPGPNKSFVSIKDTVKA</sequence>
<reference key="1">
    <citation type="submission" date="2005-09" db="EMBL/GenBank/DDBJ databases">
        <title>Complete genome sequence of Clostridium kluyveri and comparative genomics of Clostridia species.</title>
        <authorList>
            <person name="Inui M."/>
            <person name="Nonaka H."/>
            <person name="Shinoda Y."/>
            <person name="Ikenaga Y."/>
            <person name="Abe M."/>
            <person name="Naito K."/>
            <person name="Vertes A.A."/>
            <person name="Yukawa H."/>
        </authorList>
    </citation>
    <scope>NUCLEOTIDE SEQUENCE [LARGE SCALE GENOMIC DNA]</scope>
    <source>
        <strain>NBRC 12016</strain>
    </source>
</reference>
<keyword id="KW-0687">Ribonucleoprotein</keyword>
<keyword id="KW-0689">Ribosomal protein</keyword>
<keyword id="KW-0694">RNA-binding</keyword>
<keyword id="KW-0699">rRNA-binding</keyword>
<protein>
    <recommendedName>
        <fullName evidence="1">Large ribosomal subunit protein uL3</fullName>
    </recommendedName>
    <alternativeName>
        <fullName evidence="3">50S ribosomal protein L3</fullName>
    </alternativeName>
</protein>
<comment type="function">
    <text evidence="1">One of the primary rRNA binding proteins, it binds directly near the 3'-end of the 23S rRNA, where it nucleates assembly of the 50S subunit.</text>
</comment>
<comment type="subunit">
    <text evidence="1">Part of the 50S ribosomal subunit. Forms a cluster with proteins L14 and L19.</text>
</comment>
<comment type="similarity">
    <text evidence="1">Belongs to the universal ribosomal protein uL3 family.</text>
</comment>
<dbReference type="EMBL" id="AP009049">
    <property type="protein sequence ID" value="BAH05234.1"/>
    <property type="molecule type" value="Genomic_DNA"/>
</dbReference>
<dbReference type="RefSeq" id="WP_011988803.1">
    <property type="nucleotide sequence ID" value="NC_011837.1"/>
</dbReference>
<dbReference type="SMR" id="B9DYA9"/>
<dbReference type="KEGG" id="ckr:CKR_0183"/>
<dbReference type="HOGENOM" id="CLU_044142_4_1_9"/>
<dbReference type="Proteomes" id="UP000007969">
    <property type="component" value="Chromosome"/>
</dbReference>
<dbReference type="GO" id="GO:0022625">
    <property type="term" value="C:cytosolic large ribosomal subunit"/>
    <property type="evidence" value="ECO:0007669"/>
    <property type="project" value="TreeGrafter"/>
</dbReference>
<dbReference type="GO" id="GO:0019843">
    <property type="term" value="F:rRNA binding"/>
    <property type="evidence" value="ECO:0007669"/>
    <property type="project" value="UniProtKB-UniRule"/>
</dbReference>
<dbReference type="GO" id="GO:0003735">
    <property type="term" value="F:structural constituent of ribosome"/>
    <property type="evidence" value="ECO:0007669"/>
    <property type="project" value="InterPro"/>
</dbReference>
<dbReference type="GO" id="GO:0006412">
    <property type="term" value="P:translation"/>
    <property type="evidence" value="ECO:0007669"/>
    <property type="project" value="UniProtKB-UniRule"/>
</dbReference>
<dbReference type="FunFam" id="2.40.30.10:FF:000004">
    <property type="entry name" value="50S ribosomal protein L3"/>
    <property type="match status" value="1"/>
</dbReference>
<dbReference type="FunFam" id="3.30.160.810:FF:000001">
    <property type="entry name" value="50S ribosomal protein L3"/>
    <property type="match status" value="1"/>
</dbReference>
<dbReference type="Gene3D" id="3.30.160.810">
    <property type="match status" value="1"/>
</dbReference>
<dbReference type="Gene3D" id="2.40.30.10">
    <property type="entry name" value="Translation factors"/>
    <property type="match status" value="1"/>
</dbReference>
<dbReference type="HAMAP" id="MF_01325_B">
    <property type="entry name" value="Ribosomal_uL3_B"/>
    <property type="match status" value="1"/>
</dbReference>
<dbReference type="InterPro" id="IPR000597">
    <property type="entry name" value="Ribosomal_uL3"/>
</dbReference>
<dbReference type="InterPro" id="IPR019927">
    <property type="entry name" value="Ribosomal_uL3_bac/org-type"/>
</dbReference>
<dbReference type="InterPro" id="IPR019926">
    <property type="entry name" value="Ribosomal_uL3_CS"/>
</dbReference>
<dbReference type="InterPro" id="IPR009000">
    <property type="entry name" value="Transl_B-barrel_sf"/>
</dbReference>
<dbReference type="NCBIfam" id="TIGR03625">
    <property type="entry name" value="L3_bact"/>
    <property type="match status" value="1"/>
</dbReference>
<dbReference type="PANTHER" id="PTHR11229">
    <property type="entry name" value="50S RIBOSOMAL PROTEIN L3"/>
    <property type="match status" value="1"/>
</dbReference>
<dbReference type="PANTHER" id="PTHR11229:SF16">
    <property type="entry name" value="LARGE RIBOSOMAL SUBUNIT PROTEIN UL3C"/>
    <property type="match status" value="1"/>
</dbReference>
<dbReference type="Pfam" id="PF00297">
    <property type="entry name" value="Ribosomal_L3"/>
    <property type="match status" value="1"/>
</dbReference>
<dbReference type="SUPFAM" id="SSF50447">
    <property type="entry name" value="Translation proteins"/>
    <property type="match status" value="1"/>
</dbReference>
<dbReference type="PROSITE" id="PS00474">
    <property type="entry name" value="RIBOSOMAL_L3"/>
    <property type="match status" value="1"/>
</dbReference>
<feature type="chain" id="PRO_1000165879" description="Large ribosomal subunit protein uL3">
    <location>
        <begin position="1"/>
        <end position="209"/>
    </location>
</feature>
<feature type="region of interest" description="Disordered" evidence="2">
    <location>
        <begin position="130"/>
        <end position="154"/>
    </location>
</feature>
<accession>B9DYA9</accession>
<name>RL3_CLOK1</name>
<evidence type="ECO:0000255" key="1">
    <source>
        <dbReference type="HAMAP-Rule" id="MF_01325"/>
    </source>
</evidence>
<evidence type="ECO:0000256" key="2">
    <source>
        <dbReference type="SAM" id="MobiDB-lite"/>
    </source>
</evidence>
<evidence type="ECO:0000305" key="3"/>
<organism>
    <name type="scientific">Clostridium kluyveri (strain NBRC 12016)</name>
    <dbReference type="NCBI Taxonomy" id="583346"/>
    <lineage>
        <taxon>Bacteria</taxon>
        <taxon>Bacillati</taxon>
        <taxon>Bacillota</taxon>
        <taxon>Clostridia</taxon>
        <taxon>Eubacteriales</taxon>
        <taxon>Clostridiaceae</taxon>
        <taxon>Clostridium</taxon>
    </lineage>
</organism>
<gene>
    <name evidence="1" type="primary">rplC</name>
    <name type="ordered locus">CKR_0183</name>
</gene>
<proteinExistence type="inferred from homology"/>